<protein>
    <recommendedName>
        <fullName>Uncharacterized protein Mb0035</fullName>
    </recommendedName>
</protein>
<dbReference type="EMBL" id="LT708304">
    <property type="protein sequence ID" value="SIT98392.1"/>
    <property type="molecule type" value="Genomic_DNA"/>
</dbReference>
<dbReference type="RefSeq" id="NP_853704.1">
    <property type="nucleotide sequence ID" value="NC_002945.3"/>
</dbReference>
<dbReference type="RefSeq" id="WP_003400421.1">
    <property type="nucleotide sequence ID" value="NC_002945.4"/>
</dbReference>
<dbReference type="SMR" id="P64674"/>
<dbReference type="KEGG" id="mbo:BQ2027_MB0035"/>
<dbReference type="PATRIC" id="fig|233413.5.peg.41"/>
<dbReference type="Proteomes" id="UP000001419">
    <property type="component" value="Chromosome"/>
</dbReference>
<dbReference type="Gene3D" id="3.10.450.50">
    <property type="match status" value="1"/>
</dbReference>
<dbReference type="InterPro" id="IPR032710">
    <property type="entry name" value="NTF2-like_dom_sf"/>
</dbReference>
<dbReference type="InterPro" id="IPR037401">
    <property type="entry name" value="SnoaL-like"/>
</dbReference>
<dbReference type="Pfam" id="PF12680">
    <property type="entry name" value="SnoaL_2"/>
    <property type="match status" value="1"/>
</dbReference>
<dbReference type="SUPFAM" id="SSF54427">
    <property type="entry name" value="NTF2-like"/>
    <property type="match status" value="1"/>
</dbReference>
<feature type="chain" id="PRO_0000103651" description="Uncharacterized protein Mb0035">
    <location>
        <begin position="1"/>
        <end position="131"/>
    </location>
</feature>
<sequence>MTDDADLDLVRRTFAAFARGDLAELTQCFAPDVEQFVPGKHALAGVFRGVDNVVACLGDTAAAADGTMTVTLEDVLSNTDGQVIAVYRLRASRAGKVLDQREAILVTVAGGRITRLSEFYADPAATESFWA</sequence>
<keyword id="KW-1185">Reference proteome</keyword>
<organism>
    <name type="scientific">Mycobacterium bovis (strain ATCC BAA-935 / AF2122/97)</name>
    <dbReference type="NCBI Taxonomy" id="233413"/>
    <lineage>
        <taxon>Bacteria</taxon>
        <taxon>Bacillati</taxon>
        <taxon>Actinomycetota</taxon>
        <taxon>Actinomycetes</taxon>
        <taxon>Mycobacteriales</taxon>
        <taxon>Mycobacteriaceae</taxon>
        <taxon>Mycobacterium</taxon>
        <taxon>Mycobacterium tuberculosis complex</taxon>
    </lineage>
</organism>
<accession>P64674</accession>
<accession>A0A1R3XU48</accession>
<accession>P71604</accession>
<accession>X2BDT9</accession>
<gene>
    <name type="ordered locus">BQ2027_MB0035</name>
</gene>
<name>Y035_MYCBO</name>
<proteinExistence type="predicted"/>
<reference key="1">
    <citation type="journal article" date="2003" name="Proc. Natl. Acad. Sci. U.S.A.">
        <title>The complete genome sequence of Mycobacterium bovis.</title>
        <authorList>
            <person name="Garnier T."/>
            <person name="Eiglmeier K."/>
            <person name="Camus J.-C."/>
            <person name="Medina N."/>
            <person name="Mansoor H."/>
            <person name="Pryor M."/>
            <person name="Duthoy S."/>
            <person name="Grondin S."/>
            <person name="Lacroix C."/>
            <person name="Monsempe C."/>
            <person name="Simon S."/>
            <person name="Harris B."/>
            <person name="Atkin R."/>
            <person name="Doggett J."/>
            <person name="Mayes R."/>
            <person name="Keating L."/>
            <person name="Wheeler P.R."/>
            <person name="Parkhill J."/>
            <person name="Barrell B.G."/>
            <person name="Cole S.T."/>
            <person name="Gordon S.V."/>
            <person name="Hewinson R.G."/>
        </authorList>
    </citation>
    <scope>NUCLEOTIDE SEQUENCE [LARGE SCALE GENOMIC DNA]</scope>
    <source>
        <strain>ATCC BAA-935 / AF2122/97</strain>
    </source>
</reference>
<reference key="2">
    <citation type="journal article" date="2017" name="Genome Announc.">
        <title>Updated reference genome sequence and annotation of Mycobacterium bovis AF2122/97.</title>
        <authorList>
            <person name="Malone K.M."/>
            <person name="Farrell D."/>
            <person name="Stuber T.P."/>
            <person name="Schubert O.T."/>
            <person name="Aebersold R."/>
            <person name="Robbe-Austerman S."/>
            <person name="Gordon S.V."/>
        </authorList>
    </citation>
    <scope>NUCLEOTIDE SEQUENCE [LARGE SCALE GENOMIC DNA]</scope>
    <scope>GENOME REANNOTATION</scope>
    <source>
        <strain>ATCC BAA-935 / AF2122/97</strain>
    </source>
</reference>